<gene>
    <name type="primary">SPRR1B</name>
</gene>
<accession>P22528</accession>
<accession>B2R5H7</accession>
<accession>P22529</accession>
<accession>P22530</accession>
<accession>Q5T524</accession>
<proteinExistence type="evidence at protein level"/>
<organism>
    <name type="scientific">Homo sapiens</name>
    <name type="common">Human</name>
    <dbReference type="NCBI Taxonomy" id="9606"/>
    <lineage>
        <taxon>Eukaryota</taxon>
        <taxon>Metazoa</taxon>
        <taxon>Chordata</taxon>
        <taxon>Craniata</taxon>
        <taxon>Vertebrata</taxon>
        <taxon>Euteleostomi</taxon>
        <taxon>Mammalia</taxon>
        <taxon>Eutheria</taxon>
        <taxon>Euarchontoglires</taxon>
        <taxon>Primates</taxon>
        <taxon>Haplorrhini</taxon>
        <taxon>Catarrhini</taxon>
        <taxon>Hominidae</taxon>
        <taxon>Homo</taxon>
    </lineage>
</organism>
<sequence length="89" mass="9888">MSSQQQKQPCTPPPQLQQQQVKQPCQPPPQEPCIPKTKEPCHPKVPEPCHPKVPEPCQPKVPEPCHPKVPEPCPSIVTPAPAQQKTKQK</sequence>
<reference key="1">
    <citation type="journal article" date="1988" name="Mol. Cell. Biol.">
        <title>Isolation, characterization, and UV-stimulated expression of two families of genes encoding polypeptides of related structure in human epidermal keratinocytes.</title>
        <authorList>
            <person name="Kartasova T."/>
            <person name="van de Putte P."/>
        </authorList>
    </citation>
    <scope>NUCLEOTIDE SEQUENCE [MRNA]</scope>
    <scope>VARIANTS ILE-11; HIS-23; LEU-61 AND PRO-80</scope>
    <source>
        <tissue>Keratinocyte</tissue>
    </source>
</reference>
<reference key="2">
    <citation type="journal article" date="1993" name="J. Biol. Chem.">
        <title>Isolation and characterization of the human spr1 gene and its regulation of expression by phorbol ester and cyclic AMP.</title>
        <authorList>
            <person name="An G."/>
            <person name="Wu R."/>
        </authorList>
    </citation>
    <scope>NUCLEOTIDE SEQUENCE [GENOMIC DNA]</scope>
    <scope>VARIANT ILE-11</scope>
    <source>
        <tissue>Placenta</tissue>
    </source>
</reference>
<reference key="3">
    <citation type="journal article" date="2004" name="Nat. Genet.">
        <title>Complete sequencing and characterization of 21,243 full-length human cDNAs.</title>
        <authorList>
            <person name="Ota T."/>
            <person name="Suzuki Y."/>
            <person name="Nishikawa T."/>
            <person name="Otsuki T."/>
            <person name="Sugiyama T."/>
            <person name="Irie R."/>
            <person name="Wakamatsu A."/>
            <person name="Hayashi K."/>
            <person name="Sato H."/>
            <person name="Nagai K."/>
            <person name="Kimura K."/>
            <person name="Makita H."/>
            <person name="Sekine M."/>
            <person name="Obayashi M."/>
            <person name="Nishi T."/>
            <person name="Shibahara T."/>
            <person name="Tanaka T."/>
            <person name="Ishii S."/>
            <person name="Yamamoto J."/>
            <person name="Saito K."/>
            <person name="Kawai Y."/>
            <person name="Isono Y."/>
            <person name="Nakamura Y."/>
            <person name="Nagahari K."/>
            <person name="Murakami K."/>
            <person name="Yasuda T."/>
            <person name="Iwayanagi T."/>
            <person name="Wagatsuma M."/>
            <person name="Shiratori A."/>
            <person name="Sudo H."/>
            <person name="Hosoiri T."/>
            <person name="Kaku Y."/>
            <person name="Kodaira H."/>
            <person name="Kondo H."/>
            <person name="Sugawara M."/>
            <person name="Takahashi M."/>
            <person name="Kanda K."/>
            <person name="Yokoi T."/>
            <person name="Furuya T."/>
            <person name="Kikkawa E."/>
            <person name="Omura Y."/>
            <person name="Abe K."/>
            <person name="Kamihara K."/>
            <person name="Katsuta N."/>
            <person name="Sato K."/>
            <person name="Tanikawa M."/>
            <person name="Yamazaki M."/>
            <person name="Ninomiya K."/>
            <person name="Ishibashi T."/>
            <person name="Yamashita H."/>
            <person name="Murakawa K."/>
            <person name="Fujimori K."/>
            <person name="Tanai H."/>
            <person name="Kimata M."/>
            <person name="Watanabe M."/>
            <person name="Hiraoka S."/>
            <person name="Chiba Y."/>
            <person name="Ishida S."/>
            <person name="Ono Y."/>
            <person name="Takiguchi S."/>
            <person name="Watanabe S."/>
            <person name="Yosida M."/>
            <person name="Hotuta T."/>
            <person name="Kusano J."/>
            <person name="Kanehori K."/>
            <person name="Takahashi-Fujii A."/>
            <person name="Hara H."/>
            <person name="Tanase T.-O."/>
            <person name="Nomura Y."/>
            <person name="Togiya S."/>
            <person name="Komai F."/>
            <person name="Hara R."/>
            <person name="Takeuchi K."/>
            <person name="Arita M."/>
            <person name="Imose N."/>
            <person name="Musashino K."/>
            <person name="Yuuki H."/>
            <person name="Oshima A."/>
            <person name="Sasaki N."/>
            <person name="Aotsuka S."/>
            <person name="Yoshikawa Y."/>
            <person name="Matsunawa H."/>
            <person name="Ichihara T."/>
            <person name="Shiohata N."/>
            <person name="Sano S."/>
            <person name="Moriya S."/>
            <person name="Momiyama H."/>
            <person name="Satoh N."/>
            <person name="Takami S."/>
            <person name="Terashima Y."/>
            <person name="Suzuki O."/>
            <person name="Nakagawa S."/>
            <person name="Senoh A."/>
            <person name="Mizoguchi H."/>
            <person name="Goto Y."/>
            <person name="Shimizu F."/>
            <person name="Wakebe H."/>
            <person name="Hishigaki H."/>
            <person name="Watanabe T."/>
            <person name="Sugiyama A."/>
            <person name="Takemoto M."/>
            <person name="Kawakami B."/>
            <person name="Yamazaki M."/>
            <person name="Watanabe K."/>
            <person name="Kumagai A."/>
            <person name="Itakura S."/>
            <person name="Fukuzumi Y."/>
            <person name="Fujimori Y."/>
            <person name="Komiyama M."/>
            <person name="Tashiro H."/>
            <person name="Tanigami A."/>
            <person name="Fujiwara T."/>
            <person name="Ono T."/>
            <person name="Yamada K."/>
            <person name="Fujii Y."/>
            <person name="Ozaki K."/>
            <person name="Hirao M."/>
            <person name="Ohmori Y."/>
            <person name="Kawabata A."/>
            <person name="Hikiji T."/>
            <person name="Kobatake N."/>
            <person name="Inagaki H."/>
            <person name="Ikema Y."/>
            <person name="Okamoto S."/>
            <person name="Okitani R."/>
            <person name="Kawakami T."/>
            <person name="Noguchi S."/>
            <person name="Itoh T."/>
            <person name="Shigeta K."/>
            <person name="Senba T."/>
            <person name="Matsumura K."/>
            <person name="Nakajima Y."/>
            <person name="Mizuno T."/>
            <person name="Morinaga M."/>
            <person name="Sasaki M."/>
            <person name="Togashi T."/>
            <person name="Oyama M."/>
            <person name="Hata H."/>
            <person name="Watanabe M."/>
            <person name="Komatsu T."/>
            <person name="Mizushima-Sugano J."/>
            <person name="Satoh T."/>
            <person name="Shirai Y."/>
            <person name="Takahashi Y."/>
            <person name="Nakagawa K."/>
            <person name="Okumura K."/>
            <person name="Nagase T."/>
            <person name="Nomura N."/>
            <person name="Kikuchi H."/>
            <person name="Masuho Y."/>
            <person name="Yamashita R."/>
            <person name="Nakai K."/>
            <person name="Yada T."/>
            <person name="Nakamura Y."/>
            <person name="Ohara O."/>
            <person name="Isogai T."/>
            <person name="Sugano S."/>
        </authorList>
    </citation>
    <scope>NUCLEOTIDE SEQUENCE [LARGE SCALE MRNA]</scope>
    <scope>VARIANT ILE-11</scope>
    <source>
        <tissue>Tongue</tissue>
    </source>
</reference>
<reference key="4">
    <citation type="submission" date="2004-10" db="EMBL/GenBank/DDBJ databases">
        <authorList>
            <consortium name="NIEHS SNPs program"/>
        </authorList>
    </citation>
    <scope>NUCLEOTIDE SEQUENCE [GENOMIC DNA]</scope>
    <scope>VARIANT ILE-11</scope>
</reference>
<reference key="5">
    <citation type="journal article" date="2006" name="Nature">
        <title>The DNA sequence and biological annotation of human chromosome 1.</title>
        <authorList>
            <person name="Gregory S.G."/>
            <person name="Barlow K.F."/>
            <person name="McLay K.E."/>
            <person name="Kaul R."/>
            <person name="Swarbreck D."/>
            <person name="Dunham A."/>
            <person name="Scott C.E."/>
            <person name="Howe K.L."/>
            <person name="Woodfine K."/>
            <person name="Spencer C.C.A."/>
            <person name="Jones M.C."/>
            <person name="Gillson C."/>
            <person name="Searle S."/>
            <person name="Zhou Y."/>
            <person name="Kokocinski F."/>
            <person name="McDonald L."/>
            <person name="Evans R."/>
            <person name="Phillips K."/>
            <person name="Atkinson A."/>
            <person name="Cooper R."/>
            <person name="Jones C."/>
            <person name="Hall R.E."/>
            <person name="Andrews T.D."/>
            <person name="Lloyd C."/>
            <person name="Ainscough R."/>
            <person name="Almeida J.P."/>
            <person name="Ambrose K.D."/>
            <person name="Anderson F."/>
            <person name="Andrew R.W."/>
            <person name="Ashwell R.I.S."/>
            <person name="Aubin K."/>
            <person name="Babbage A.K."/>
            <person name="Bagguley C.L."/>
            <person name="Bailey J."/>
            <person name="Beasley H."/>
            <person name="Bethel G."/>
            <person name="Bird C.P."/>
            <person name="Bray-Allen S."/>
            <person name="Brown J.Y."/>
            <person name="Brown A.J."/>
            <person name="Buckley D."/>
            <person name="Burton J."/>
            <person name="Bye J."/>
            <person name="Carder C."/>
            <person name="Chapman J.C."/>
            <person name="Clark S.Y."/>
            <person name="Clarke G."/>
            <person name="Clee C."/>
            <person name="Cobley V."/>
            <person name="Collier R.E."/>
            <person name="Corby N."/>
            <person name="Coville G.J."/>
            <person name="Davies J."/>
            <person name="Deadman R."/>
            <person name="Dunn M."/>
            <person name="Earthrowl M."/>
            <person name="Ellington A.G."/>
            <person name="Errington H."/>
            <person name="Frankish A."/>
            <person name="Frankland J."/>
            <person name="French L."/>
            <person name="Garner P."/>
            <person name="Garnett J."/>
            <person name="Gay L."/>
            <person name="Ghori M.R.J."/>
            <person name="Gibson R."/>
            <person name="Gilby L.M."/>
            <person name="Gillett W."/>
            <person name="Glithero R.J."/>
            <person name="Grafham D.V."/>
            <person name="Griffiths C."/>
            <person name="Griffiths-Jones S."/>
            <person name="Grocock R."/>
            <person name="Hammond S."/>
            <person name="Harrison E.S.I."/>
            <person name="Hart E."/>
            <person name="Haugen E."/>
            <person name="Heath P.D."/>
            <person name="Holmes S."/>
            <person name="Holt K."/>
            <person name="Howden P.J."/>
            <person name="Hunt A.R."/>
            <person name="Hunt S.E."/>
            <person name="Hunter G."/>
            <person name="Isherwood J."/>
            <person name="James R."/>
            <person name="Johnson C."/>
            <person name="Johnson D."/>
            <person name="Joy A."/>
            <person name="Kay M."/>
            <person name="Kershaw J.K."/>
            <person name="Kibukawa M."/>
            <person name="Kimberley A.M."/>
            <person name="King A."/>
            <person name="Knights A.J."/>
            <person name="Lad H."/>
            <person name="Laird G."/>
            <person name="Lawlor S."/>
            <person name="Leongamornlert D.A."/>
            <person name="Lloyd D.M."/>
            <person name="Loveland J."/>
            <person name="Lovell J."/>
            <person name="Lush M.J."/>
            <person name="Lyne R."/>
            <person name="Martin S."/>
            <person name="Mashreghi-Mohammadi M."/>
            <person name="Matthews L."/>
            <person name="Matthews N.S.W."/>
            <person name="McLaren S."/>
            <person name="Milne S."/>
            <person name="Mistry S."/>
            <person name="Moore M.J.F."/>
            <person name="Nickerson T."/>
            <person name="O'Dell C.N."/>
            <person name="Oliver K."/>
            <person name="Palmeiri A."/>
            <person name="Palmer S.A."/>
            <person name="Parker A."/>
            <person name="Patel D."/>
            <person name="Pearce A.V."/>
            <person name="Peck A.I."/>
            <person name="Pelan S."/>
            <person name="Phelps K."/>
            <person name="Phillimore B.J."/>
            <person name="Plumb R."/>
            <person name="Rajan J."/>
            <person name="Raymond C."/>
            <person name="Rouse G."/>
            <person name="Saenphimmachak C."/>
            <person name="Sehra H.K."/>
            <person name="Sheridan E."/>
            <person name="Shownkeen R."/>
            <person name="Sims S."/>
            <person name="Skuce C.D."/>
            <person name="Smith M."/>
            <person name="Steward C."/>
            <person name="Subramanian S."/>
            <person name="Sycamore N."/>
            <person name="Tracey A."/>
            <person name="Tromans A."/>
            <person name="Van Helmond Z."/>
            <person name="Wall M."/>
            <person name="Wallis J.M."/>
            <person name="White S."/>
            <person name="Whitehead S.L."/>
            <person name="Wilkinson J.E."/>
            <person name="Willey D.L."/>
            <person name="Williams H."/>
            <person name="Wilming L."/>
            <person name="Wray P.W."/>
            <person name="Wu Z."/>
            <person name="Coulson A."/>
            <person name="Vaudin M."/>
            <person name="Sulston J.E."/>
            <person name="Durbin R.M."/>
            <person name="Hubbard T."/>
            <person name="Wooster R."/>
            <person name="Dunham I."/>
            <person name="Carter N.P."/>
            <person name="McVean G."/>
            <person name="Ross M.T."/>
            <person name="Harrow J."/>
            <person name="Olson M.V."/>
            <person name="Beck S."/>
            <person name="Rogers J."/>
            <person name="Bentley D.R."/>
        </authorList>
    </citation>
    <scope>NUCLEOTIDE SEQUENCE [LARGE SCALE GENOMIC DNA]</scope>
</reference>
<reference key="6">
    <citation type="journal article" date="2004" name="Genome Res.">
        <title>The status, quality, and expansion of the NIH full-length cDNA project: the Mammalian Gene Collection (MGC).</title>
        <authorList>
            <consortium name="The MGC Project Team"/>
        </authorList>
    </citation>
    <scope>NUCLEOTIDE SEQUENCE [LARGE SCALE MRNA]</scope>
    <scope>VARIANT ILE-11</scope>
</reference>
<reference key="7">
    <citation type="journal article" date="1995" name="J. Invest. Dermatol.">
        <title>The pancornulins: a group of small proline rich-related cornified envelope precursors with bifunctional capabilities in isopeptide bond formation.</title>
        <authorList>
            <person name="Greco M.A."/>
            <person name="Lorand L."/>
            <person name="Lane W.S."/>
            <person name="Baden H.P."/>
            <person name="Parameswaran K.N.P."/>
            <person name="Kvedar J.C."/>
        </authorList>
    </citation>
    <scope>PROTEIN SEQUENCE OF 23-36 AND 53-85</scope>
    <scope>IDENTIFICATION BY MASS SPECTROMETRY</scope>
    <source>
        <tissue>Keratinocyte</tissue>
    </source>
</reference>
<name>SPR1B_HUMAN</name>
<dbReference type="EMBL" id="M19888">
    <property type="protein sequence ID" value="AAA36636.1"/>
    <property type="molecule type" value="mRNA"/>
</dbReference>
<dbReference type="EMBL" id="M21300">
    <property type="protein sequence ID" value="AAA36637.1"/>
    <property type="molecule type" value="mRNA"/>
</dbReference>
<dbReference type="EMBL" id="M21301">
    <property type="protein sequence ID" value="AAA36638.1"/>
    <property type="molecule type" value="mRNA"/>
</dbReference>
<dbReference type="EMBL" id="M84757">
    <property type="protein sequence ID" value="AAA36643.1"/>
    <property type="molecule type" value="Genomic_DNA"/>
</dbReference>
<dbReference type="EMBL" id="AK312191">
    <property type="protein sequence ID" value="BAG35124.1"/>
    <property type="molecule type" value="mRNA"/>
</dbReference>
<dbReference type="EMBL" id="AY787223">
    <property type="protein sequence ID" value="AAV40826.1"/>
    <property type="molecule type" value="Genomic_DNA"/>
</dbReference>
<dbReference type="EMBL" id="AL356867">
    <property type="status" value="NOT_ANNOTATED_CDS"/>
    <property type="molecule type" value="Genomic_DNA"/>
</dbReference>
<dbReference type="EMBL" id="BC056240">
    <property type="protein sequence ID" value="AAH56240.1"/>
    <property type="molecule type" value="mRNA"/>
</dbReference>
<dbReference type="CCDS" id="CCDS30863.1"/>
<dbReference type="PIR" id="A46709">
    <property type="entry name" value="A46709"/>
</dbReference>
<dbReference type="RefSeq" id="NP_003116.2">
    <property type="nucleotide sequence ID" value="NM_003125.3"/>
</dbReference>
<dbReference type="BioGRID" id="112577">
    <property type="interactions" value="53"/>
</dbReference>
<dbReference type="FunCoup" id="P22528">
    <property type="interactions" value="191"/>
</dbReference>
<dbReference type="IntAct" id="P22528">
    <property type="interactions" value="34"/>
</dbReference>
<dbReference type="MINT" id="P22528"/>
<dbReference type="STRING" id="9606.ENSP00000306461"/>
<dbReference type="GlyGen" id="P22528">
    <property type="glycosylation" value="1 site, 1 O-linked glycan (1 site)"/>
</dbReference>
<dbReference type="iPTMnet" id="P22528"/>
<dbReference type="PhosphoSitePlus" id="P22528"/>
<dbReference type="BioMuta" id="SPRR1B"/>
<dbReference type="DMDM" id="84028265"/>
<dbReference type="jPOST" id="P22528"/>
<dbReference type="MassIVE" id="P22528"/>
<dbReference type="PaxDb" id="9606-ENSP00000306461"/>
<dbReference type="PeptideAtlas" id="P22528"/>
<dbReference type="ProteomicsDB" id="53997"/>
<dbReference type="Pumba" id="P22528"/>
<dbReference type="Antibodypedia" id="54236">
    <property type="antibodies" value="98 antibodies from 19 providers"/>
</dbReference>
<dbReference type="DNASU" id="6699"/>
<dbReference type="Ensembl" id="ENST00000307098.5">
    <property type="protein sequence ID" value="ENSP00000306461.4"/>
    <property type="gene ID" value="ENSG00000169469.9"/>
</dbReference>
<dbReference type="GeneID" id="6699"/>
<dbReference type="KEGG" id="hsa:6699"/>
<dbReference type="MANE-Select" id="ENST00000307098.5">
    <property type="protein sequence ID" value="ENSP00000306461.4"/>
    <property type="RefSeq nucleotide sequence ID" value="NM_003125.3"/>
    <property type="RefSeq protein sequence ID" value="NP_003116.2"/>
</dbReference>
<dbReference type="UCSC" id="uc001fba.4">
    <property type="organism name" value="human"/>
</dbReference>
<dbReference type="AGR" id="HGNC:11260"/>
<dbReference type="CTD" id="6699"/>
<dbReference type="DisGeNET" id="6699"/>
<dbReference type="GeneCards" id="SPRR1B"/>
<dbReference type="HGNC" id="HGNC:11260">
    <property type="gene designation" value="SPRR1B"/>
</dbReference>
<dbReference type="HPA" id="ENSG00000169469">
    <property type="expression patterns" value="Tissue enhanced (cervix, esophagus, vagina)"/>
</dbReference>
<dbReference type="MIM" id="182266">
    <property type="type" value="gene"/>
</dbReference>
<dbReference type="neXtProt" id="NX_P22528"/>
<dbReference type="OpenTargets" id="ENSG00000169469"/>
<dbReference type="PharmGKB" id="PA36089"/>
<dbReference type="VEuPathDB" id="HostDB:ENSG00000169469"/>
<dbReference type="eggNOG" id="ENOG502SCIR">
    <property type="taxonomic scope" value="Eukaryota"/>
</dbReference>
<dbReference type="GeneTree" id="ENSGT00940000163248"/>
<dbReference type="HOGENOM" id="CLU_186226_0_0_1"/>
<dbReference type="InParanoid" id="P22528"/>
<dbReference type="OMA" id="PPAQEKC"/>
<dbReference type="OrthoDB" id="9837279at2759"/>
<dbReference type="PAN-GO" id="P22528">
    <property type="GO annotations" value="1 GO annotation based on evolutionary models"/>
</dbReference>
<dbReference type="PhylomeDB" id="P22528"/>
<dbReference type="TreeFam" id="TF338205"/>
<dbReference type="PathwayCommons" id="P22528"/>
<dbReference type="Reactome" id="R-HSA-6809371">
    <property type="pathway name" value="Formation of the cornified envelope"/>
</dbReference>
<dbReference type="SignaLink" id="P22528"/>
<dbReference type="SIGNOR" id="P22528"/>
<dbReference type="BioGRID-ORCS" id="6699">
    <property type="hits" value="91 hits in 1055 CRISPR screens"/>
</dbReference>
<dbReference type="ChiTaRS" id="SPRR1B">
    <property type="organism name" value="human"/>
</dbReference>
<dbReference type="GeneWiki" id="SPRR1B"/>
<dbReference type="GenomeRNAi" id="6699"/>
<dbReference type="Pharos" id="P22528">
    <property type="development level" value="Tbio"/>
</dbReference>
<dbReference type="PRO" id="PR:P22528"/>
<dbReference type="Proteomes" id="UP000005640">
    <property type="component" value="Chromosome 1"/>
</dbReference>
<dbReference type="RNAct" id="P22528">
    <property type="molecule type" value="protein"/>
</dbReference>
<dbReference type="Bgee" id="ENSG00000169469">
    <property type="expression patterns" value="Expressed in amniotic fluid and 106 other cell types or tissues"/>
</dbReference>
<dbReference type="GO" id="GO:0001533">
    <property type="term" value="C:cornified envelope"/>
    <property type="evidence" value="ECO:0000314"/>
    <property type="project" value="UniProtKB"/>
</dbReference>
<dbReference type="GO" id="GO:0005737">
    <property type="term" value="C:cytoplasm"/>
    <property type="evidence" value="ECO:0000304"/>
    <property type="project" value="ProtInc"/>
</dbReference>
<dbReference type="GO" id="GO:0005829">
    <property type="term" value="C:cytosol"/>
    <property type="evidence" value="ECO:0000304"/>
    <property type="project" value="Reactome"/>
</dbReference>
<dbReference type="GO" id="GO:0005198">
    <property type="term" value="F:structural molecule activity"/>
    <property type="evidence" value="ECO:0000304"/>
    <property type="project" value="ProtInc"/>
</dbReference>
<dbReference type="GO" id="GO:0008544">
    <property type="term" value="P:epidermis development"/>
    <property type="evidence" value="ECO:0000304"/>
    <property type="project" value="ProtInc"/>
</dbReference>
<dbReference type="GO" id="GO:0031424">
    <property type="term" value="P:keratinization"/>
    <property type="evidence" value="ECO:0007669"/>
    <property type="project" value="UniProtKB-KW"/>
</dbReference>
<dbReference type="GO" id="GO:0030216">
    <property type="term" value="P:keratinocyte differentiation"/>
    <property type="evidence" value="ECO:0000314"/>
    <property type="project" value="UniProtKB"/>
</dbReference>
<dbReference type="GO" id="GO:0018149">
    <property type="term" value="P:peptide cross-linking"/>
    <property type="evidence" value="ECO:0000314"/>
    <property type="project" value="UniProtKB"/>
</dbReference>
<dbReference type="Pfam" id="PF02389">
    <property type="entry name" value="Cornifin"/>
    <property type="match status" value="1"/>
</dbReference>
<dbReference type="PRINTS" id="PR00021">
    <property type="entry name" value="PRORICH"/>
</dbReference>
<feature type="chain" id="PRO_0000149996" description="Cornifin-B">
    <location>
        <begin position="1"/>
        <end position="89"/>
    </location>
</feature>
<feature type="repeat" description="1">
    <location>
        <begin position="3"/>
        <end position="14"/>
    </location>
</feature>
<feature type="repeat" description="2">
    <location>
        <begin position="18"/>
        <end position="29"/>
    </location>
</feature>
<feature type="repeat" description="1">
    <location>
        <begin position="31"/>
        <end position="38"/>
    </location>
</feature>
<feature type="repeat" description="2">
    <location>
        <begin position="39"/>
        <end position="46"/>
    </location>
</feature>
<feature type="repeat" description="3">
    <location>
        <begin position="47"/>
        <end position="54"/>
    </location>
</feature>
<feature type="repeat" description="4">
    <location>
        <begin position="55"/>
        <end position="62"/>
    </location>
</feature>
<feature type="repeat" description="5">
    <location>
        <begin position="63"/>
        <end position="70"/>
    </location>
</feature>
<feature type="repeat" description="6">
    <location>
        <begin position="71"/>
        <end position="78"/>
    </location>
</feature>
<feature type="region of interest" description="Disordered" evidence="1">
    <location>
        <begin position="1"/>
        <end position="29"/>
    </location>
</feature>
<feature type="region of interest" description="2 X 12 AA approximate repeats">
    <location>
        <begin position="3"/>
        <end position="29"/>
    </location>
</feature>
<feature type="region of interest" description="6 X 8 AA approximate tandem repeats">
    <location>
        <begin position="31"/>
        <end position="78"/>
    </location>
</feature>
<feature type="sequence variant" id="VAR_021099" description="In dbSNP:rs3795382." evidence="2 3 4 5 6">
    <original>T</original>
    <variation>I</variation>
    <location>
        <position position="11"/>
    </location>
</feature>
<feature type="sequence variant" id="VAR_002164" evidence="4">
    <original>Q</original>
    <variation>H</variation>
    <location>
        <position position="23"/>
    </location>
</feature>
<feature type="sequence variant" id="VAR_002165" description="In dbSNP:rs768218193." evidence="4">
    <original>V</original>
    <variation>L</variation>
    <location>
        <position position="61"/>
    </location>
</feature>
<feature type="sequence variant" id="VAR_002166" evidence="4">
    <original>A</original>
    <variation>P</variation>
    <location>
        <position position="80"/>
    </location>
</feature>
<protein>
    <recommendedName>
        <fullName>Cornifin-B</fullName>
    </recommendedName>
    <alternativeName>
        <fullName>14.9 kDa pancornulin</fullName>
    </alternativeName>
    <alternativeName>
        <fullName>Small proline-rich protein IB</fullName>
        <shortName>SPR-IB</shortName>
    </alternativeName>
</protein>
<comment type="function">
    <text>Cross-linked envelope protein of keratinocytes. It is a keratinocyte protein that first appears in the cell cytosol, but ultimately becomes cross-linked to membrane proteins by transglutaminase. All that results in the formation of an insoluble envelope beneath the plasma membrane. Can function as both amine donor and acceptor in transglutaminase-mediated cross-linkage.</text>
</comment>
<comment type="subcellular location">
    <subcellularLocation>
        <location>Cytoplasm</location>
    </subcellularLocation>
</comment>
<comment type="tissue specificity">
    <text>Suprabasal layers of squamous-differentiated tissues such as epidermis, esophagus, tongue and trachea.</text>
</comment>
<comment type="developmental stage">
    <text>Expressed during differentiation of squamous cells.</text>
</comment>
<comment type="induction">
    <text>By carcinogenic agents and by UV light. During squamous differentiation of epidermal keratinocytes.</text>
</comment>
<comment type="PTM">
    <text>The N-terminus is blocked.</text>
</comment>
<comment type="similarity">
    <text evidence="7">Belongs to the cornifin (SPRR) family.</text>
</comment>
<evidence type="ECO:0000256" key="1">
    <source>
        <dbReference type="SAM" id="MobiDB-lite"/>
    </source>
</evidence>
<evidence type="ECO:0000269" key="2">
    <source>
    </source>
</evidence>
<evidence type="ECO:0000269" key="3">
    <source>
    </source>
</evidence>
<evidence type="ECO:0000269" key="4">
    <source>
    </source>
</evidence>
<evidence type="ECO:0000269" key="5">
    <source>
    </source>
</evidence>
<evidence type="ECO:0000269" key="6">
    <source ref="4"/>
</evidence>
<evidence type="ECO:0000305" key="7"/>
<keyword id="KW-0963">Cytoplasm</keyword>
<keyword id="KW-0903">Direct protein sequencing</keyword>
<keyword id="KW-0417">Keratinization</keyword>
<keyword id="KW-1267">Proteomics identification</keyword>
<keyword id="KW-1185">Reference proteome</keyword>
<keyword id="KW-0677">Repeat</keyword>